<protein>
    <recommendedName>
        <fullName evidence="2">Beta-defensin 131A</fullName>
    </recommendedName>
    <alternativeName>
        <fullName evidence="2">Defensin, beta 131</fullName>
    </alternativeName>
</protein>
<dbReference type="EMBL" id="DQ012082">
    <property type="protein sequence ID" value="AAY59812.1"/>
    <property type="molecule type" value="mRNA"/>
</dbReference>
<dbReference type="RefSeq" id="NP_001123251.1">
    <property type="nucleotide sequence ID" value="NM_001129779.1"/>
</dbReference>
<dbReference type="STRING" id="9598.ENSPTRP00000027407"/>
<dbReference type="PaxDb" id="9598-ENSPTRP00000027407"/>
<dbReference type="Ensembl" id="ENSPTRT00000029705.2">
    <property type="protein sequence ID" value="ENSPTRP00000027407.1"/>
    <property type="gene ID" value="ENSPTRG00000015911.2"/>
</dbReference>
<dbReference type="GeneID" id="743927"/>
<dbReference type="KEGG" id="ptr:743927"/>
<dbReference type="CTD" id="644414"/>
<dbReference type="eggNOG" id="ENOG502TEDN">
    <property type="taxonomic scope" value="Eukaryota"/>
</dbReference>
<dbReference type="GeneTree" id="ENSGT00390000001538"/>
<dbReference type="HOGENOM" id="CLU_203372_0_0_1"/>
<dbReference type="InParanoid" id="Q30KJ8"/>
<dbReference type="OMA" id="PSEYYYH"/>
<dbReference type="TreeFam" id="TF341399"/>
<dbReference type="Proteomes" id="UP000002277">
    <property type="component" value="Chromosome 4"/>
</dbReference>
<dbReference type="Bgee" id="ENSPTRG00000015911">
    <property type="expression patterns" value="Expressed in fibroblast"/>
</dbReference>
<dbReference type="GO" id="GO:0005615">
    <property type="term" value="C:extracellular space"/>
    <property type="evidence" value="ECO:0000318"/>
    <property type="project" value="GO_Central"/>
</dbReference>
<dbReference type="GO" id="GO:0042742">
    <property type="term" value="P:defense response to bacterium"/>
    <property type="evidence" value="ECO:0007669"/>
    <property type="project" value="UniProtKB-KW"/>
</dbReference>
<dbReference type="GO" id="GO:0045087">
    <property type="term" value="P:innate immune response"/>
    <property type="evidence" value="ECO:0007669"/>
    <property type="project" value="InterPro"/>
</dbReference>
<dbReference type="InterPro" id="IPR025933">
    <property type="entry name" value="Beta_defensin_dom"/>
</dbReference>
<dbReference type="PANTHER" id="PTHR47900">
    <property type="entry name" value="BETA-DEFENSIN 131A"/>
    <property type="match status" value="1"/>
</dbReference>
<dbReference type="PANTHER" id="PTHR47900:SF1">
    <property type="entry name" value="BETA-DEFENSIN 131A"/>
    <property type="match status" value="1"/>
</dbReference>
<dbReference type="Pfam" id="PF13841">
    <property type="entry name" value="Defensin_beta_2"/>
    <property type="match status" value="1"/>
</dbReference>
<sequence length="71" mass="8384">MRVLFFVFGVLSLMFTVPPARSFISNDECPSEYYYHCRLKCNADEHAIRYCADFSICCKLKIIEIHGQKKW</sequence>
<comment type="function">
    <text evidence="2 4">Has antibacterial activity (Probable). Upon stimulation with lipoteichoic acid, promotes cytokines and chemokines production and secretion (By similarity).</text>
</comment>
<comment type="subcellular location">
    <subcellularLocation>
        <location evidence="4">Secreted</location>
    </subcellularLocation>
</comment>
<comment type="similarity">
    <text evidence="4">Belongs to the beta-defensin family.</text>
</comment>
<organism>
    <name type="scientific">Pan troglodytes</name>
    <name type="common">Chimpanzee</name>
    <dbReference type="NCBI Taxonomy" id="9598"/>
    <lineage>
        <taxon>Eukaryota</taxon>
        <taxon>Metazoa</taxon>
        <taxon>Chordata</taxon>
        <taxon>Craniata</taxon>
        <taxon>Vertebrata</taxon>
        <taxon>Euteleostomi</taxon>
        <taxon>Mammalia</taxon>
        <taxon>Eutheria</taxon>
        <taxon>Euarchontoglires</taxon>
        <taxon>Primates</taxon>
        <taxon>Haplorrhini</taxon>
        <taxon>Catarrhini</taxon>
        <taxon>Hominidae</taxon>
        <taxon>Pan</taxon>
    </lineage>
</organism>
<proteinExistence type="inferred from homology"/>
<evidence type="ECO:0000250" key="1"/>
<evidence type="ECO:0000250" key="2">
    <source>
        <dbReference type="UniProtKB" id="P59861"/>
    </source>
</evidence>
<evidence type="ECO:0000255" key="3"/>
<evidence type="ECO:0000305" key="4"/>
<reference key="1">
    <citation type="journal article" date="2005" name="Physiol. Genomics">
        <title>Cross-species analysis of the mammalian beta-defensin gene family: presence of syntenic gene clusters and preferential expression in the male reproductive tract.</title>
        <authorList>
            <person name="Patil A.A."/>
            <person name="Cai Y."/>
            <person name="Sang Y."/>
            <person name="Blecha F."/>
            <person name="Zhang G."/>
        </authorList>
    </citation>
    <scope>NUCLEOTIDE SEQUENCE [MRNA]</scope>
</reference>
<gene>
    <name evidence="2" type="primary">DEFB131A</name>
</gene>
<feature type="signal peptide" evidence="3">
    <location>
        <begin position="1"/>
        <end position="22"/>
    </location>
</feature>
<feature type="peptide" id="PRO_0000045356" description="Beta-defensin 131A">
    <location>
        <begin position="23"/>
        <end position="71"/>
    </location>
</feature>
<feature type="disulfide bond" evidence="1">
    <location>
        <begin position="29"/>
        <end position="57"/>
    </location>
</feature>
<feature type="disulfide bond" evidence="1">
    <location>
        <begin position="37"/>
        <end position="51"/>
    </location>
</feature>
<feature type="disulfide bond" evidence="1">
    <location>
        <begin position="41"/>
        <end position="58"/>
    </location>
</feature>
<accession>Q30KJ8</accession>
<keyword id="KW-0044">Antibiotic</keyword>
<keyword id="KW-0929">Antimicrobial</keyword>
<keyword id="KW-0211">Defensin</keyword>
<keyword id="KW-1015">Disulfide bond</keyword>
<keyword id="KW-1185">Reference proteome</keyword>
<keyword id="KW-0964">Secreted</keyword>
<keyword id="KW-0732">Signal</keyword>
<name>D131A_PANTR</name>